<sequence>MEMKQMKFLTHQAFFSSVRSGDLSQLQQLVDNLTGDELIDESSPCSAVAELMSVQNDAGETAVYISAAENLEDIFRYLIRFSSLETVKIRSKSDMNAFHVAAKRGHLGIVKELLRLWPELCRICDASNTSPLYAAAVQDHLEIVNAMLDVDPSCAMIVRKNGKTSLHTAGRYGLLRIVKALIEKDAAIVGVKDKKGQTALHMAVKGRSLEVVEEILQADYTILNERDRKGNTALHIATRKARPQITSLLLTFTAIEVNAINNQKETAMDLADKLQYSESALEINEALVEAGAKHGRFIGREDEARALKRAVSDIKHEVQSQLLQNEKTNRRVSGIAKELRKLHREAVQNTTNSITVVAVLFASIAFLAIFNLPGQYFTEGSHVGQANIAGRTGFRVFCLLNATSLFISLAVVVVQITLVAWDTRAQKKVVSVVNKLMWAACACTFGAFLAIAFAVVGKGNSWMAITITLLGAPILVGTLASMCYFVFRQRFRSGNDSQRRIRRGSSKSFSWSYSHHVSDFEDESDFEKIIAL</sequence>
<accession>Q9ZU96</accession>
<accession>Q8LFC8</accession>
<name>Y2168_ARATH</name>
<dbReference type="EMBL" id="AC006069">
    <property type="protein sequence ID" value="AAD12703.1"/>
    <property type="molecule type" value="Genomic_DNA"/>
</dbReference>
<dbReference type="EMBL" id="CP002685">
    <property type="protein sequence ID" value="AEC05484.1"/>
    <property type="molecule type" value="Genomic_DNA"/>
</dbReference>
<dbReference type="EMBL" id="AY084921">
    <property type="protein sequence ID" value="AAM61483.1"/>
    <property type="molecule type" value="mRNA"/>
</dbReference>
<dbReference type="PIR" id="G84427">
    <property type="entry name" value="G84427"/>
</dbReference>
<dbReference type="RefSeq" id="NP_565274.1">
    <property type="nucleotide sequence ID" value="NM_126229.4"/>
</dbReference>
<dbReference type="SMR" id="Q9ZU96"/>
<dbReference type="BioGRID" id="100">
    <property type="interactions" value="39"/>
</dbReference>
<dbReference type="FunCoup" id="Q9ZU96">
    <property type="interactions" value="888"/>
</dbReference>
<dbReference type="IntAct" id="Q9ZU96">
    <property type="interactions" value="39"/>
</dbReference>
<dbReference type="STRING" id="3702.Q9ZU96"/>
<dbReference type="iPTMnet" id="Q9ZU96"/>
<dbReference type="PaxDb" id="3702-AT2G01680.1"/>
<dbReference type="ProteomicsDB" id="242861"/>
<dbReference type="EnsemblPlants" id="AT2G01680.1">
    <property type="protein sequence ID" value="AT2G01680.1"/>
    <property type="gene ID" value="AT2G01680"/>
</dbReference>
<dbReference type="GeneID" id="814697"/>
<dbReference type="Gramene" id="AT2G01680.1">
    <property type="protein sequence ID" value="AT2G01680.1"/>
    <property type="gene ID" value="AT2G01680"/>
</dbReference>
<dbReference type="KEGG" id="ath:AT2G01680"/>
<dbReference type="Araport" id="AT2G01680"/>
<dbReference type="TAIR" id="AT2G01680"/>
<dbReference type="eggNOG" id="KOG0504">
    <property type="taxonomic scope" value="Eukaryota"/>
</dbReference>
<dbReference type="HOGENOM" id="CLU_000134_49_0_1"/>
<dbReference type="InParanoid" id="Q9ZU96"/>
<dbReference type="OMA" id="CTCGSFL"/>
<dbReference type="OrthoDB" id="194358at2759"/>
<dbReference type="PhylomeDB" id="Q9ZU96"/>
<dbReference type="PRO" id="PR:Q9ZU96"/>
<dbReference type="Proteomes" id="UP000006548">
    <property type="component" value="Chromosome 2"/>
</dbReference>
<dbReference type="ExpressionAtlas" id="Q9ZU96">
    <property type="expression patterns" value="baseline and differential"/>
</dbReference>
<dbReference type="GO" id="GO:0016020">
    <property type="term" value="C:membrane"/>
    <property type="evidence" value="ECO:0007669"/>
    <property type="project" value="UniProtKB-SubCell"/>
</dbReference>
<dbReference type="FunFam" id="1.25.40.20:FF:000785">
    <property type="entry name" value="Ankyrin repeat-containing protein At2g01680"/>
    <property type="match status" value="1"/>
</dbReference>
<dbReference type="FunFam" id="1.25.40.20:FF:000379">
    <property type="entry name" value="Ankyrin repeat-containing protein At5g02620"/>
    <property type="match status" value="1"/>
</dbReference>
<dbReference type="Gene3D" id="1.25.40.20">
    <property type="entry name" value="Ankyrin repeat-containing domain"/>
    <property type="match status" value="2"/>
</dbReference>
<dbReference type="InterPro" id="IPR002110">
    <property type="entry name" value="Ankyrin_rpt"/>
</dbReference>
<dbReference type="InterPro" id="IPR036770">
    <property type="entry name" value="Ankyrin_rpt-contain_sf"/>
</dbReference>
<dbReference type="InterPro" id="IPR026961">
    <property type="entry name" value="PGG_dom"/>
</dbReference>
<dbReference type="PANTHER" id="PTHR24186:SF2">
    <property type="entry name" value="OS02G0735700 PROTEIN"/>
    <property type="match status" value="1"/>
</dbReference>
<dbReference type="PANTHER" id="PTHR24186">
    <property type="entry name" value="PROTEIN PHOSPHATASE 1 REGULATORY SUBUNIT"/>
    <property type="match status" value="1"/>
</dbReference>
<dbReference type="Pfam" id="PF00023">
    <property type="entry name" value="Ank"/>
    <property type="match status" value="1"/>
</dbReference>
<dbReference type="Pfam" id="PF12796">
    <property type="entry name" value="Ank_2"/>
    <property type="match status" value="2"/>
</dbReference>
<dbReference type="Pfam" id="PF13962">
    <property type="entry name" value="PGG"/>
    <property type="match status" value="1"/>
</dbReference>
<dbReference type="SMART" id="SM00248">
    <property type="entry name" value="ANK"/>
    <property type="match status" value="6"/>
</dbReference>
<dbReference type="SUPFAM" id="SSF48403">
    <property type="entry name" value="Ankyrin repeat"/>
    <property type="match status" value="1"/>
</dbReference>
<dbReference type="PROSITE" id="PS50297">
    <property type="entry name" value="ANK_REP_REGION"/>
    <property type="match status" value="1"/>
</dbReference>
<dbReference type="PROSITE" id="PS50088">
    <property type="entry name" value="ANK_REPEAT"/>
    <property type="match status" value="2"/>
</dbReference>
<organism>
    <name type="scientific">Arabidopsis thaliana</name>
    <name type="common">Mouse-ear cress</name>
    <dbReference type="NCBI Taxonomy" id="3702"/>
    <lineage>
        <taxon>Eukaryota</taxon>
        <taxon>Viridiplantae</taxon>
        <taxon>Streptophyta</taxon>
        <taxon>Embryophyta</taxon>
        <taxon>Tracheophyta</taxon>
        <taxon>Spermatophyta</taxon>
        <taxon>Magnoliopsida</taxon>
        <taxon>eudicotyledons</taxon>
        <taxon>Gunneridae</taxon>
        <taxon>Pentapetalae</taxon>
        <taxon>rosids</taxon>
        <taxon>malvids</taxon>
        <taxon>Brassicales</taxon>
        <taxon>Brassicaceae</taxon>
        <taxon>Camelineae</taxon>
        <taxon>Arabidopsis</taxon>
    </lineage>
</organism>
<protein>
    <recommendedName>
        <fullName>Ankyrin repeat-containing protein At2g01680</fullName>
    </recommendedName>
</protein>
<proteinExistence type="evidence at transcript level"/>
<reference key="1">
    <citation type="journal article" date="1999" name="Nature">
        <title>Sequence and analysis of chromosome 2 of the plant Arabidopsis thaliana.</title>
        <authorList>
            <person name="Lin X."/>
            <person name="Kaul S."/>
            <person name="Rounsley S.D."/>
            <person name="Shea T.P."/>
            <person name="Benito M.-I."/>
            <person name="Town C.D."/>
            <person name="Fujii C.Y."/>
            <person name="Mason T.M."/>
            <person name="Bowman C.L."/>
            <person name="Barnstead M.E."/>
            <person name="Feldblyum T.V."/>
            <person name="Buell C.R."/>
            <person name="Ketchum K.A."/>
            <person name="Lee J.J."/>
            <person name="Ronning C.M."/>
            <person name="Koo H.L."/>
            <person name="Moffat K.S."/>
            <person name="Cronin L.A."/>
            <person name="Shen M."/>
            <person name="Pai G."/>
            <person name="Van Aken S."/>
            <person name="Umayam L."/>
            <person name="Tallon L.J."/>
            <person name="Gill J.E."/>
            <person name="Adams M.D."/>
            <person name="Carrera A.J."/>
            <person name="Creasy T.H."/>
            <person name="Goodman H.M."/>
            <person name="Somerville C.R."/>
            <person name="Copenhaver G.P."/>
            <person name="Preuss D."/>
            <person name="Nierman W.C."/>
            <person name="White O."/>
            <person name="Eisen J.A."/>
            <person name="Salzberg S.L."/>
            <person name="Fraser C.M."/>
            <person name="Venter J.C."/>
        </authorList>
    </citation>
    <scope>NUCLEOTIDE SEQUENCE [LARGE SCALE GENOMIC DNA]</scope>
    <source>
        <strain>cv. Columbia</strain>
    </source>
</reference>
<reference key="2">
    <citation type="journal article" date="2017" name="Plant J.">
        <title>Araport11: a complete reannotation of the Arabidopsis thaliana reference genome.</title>
        <authorList>
            <person name="Cheng C.Y."/>
            <person name="Krishnakumar V."/>
            <person name="Chan A.P."/>
            <person name="Thibaud-Nissen F."/>
            <person name="Schobel S."/>
            <person name="Town C.D."/>
        </authorList>
    </citation>
    <scope>GENOME REANNOTATION</scope>
    <source>
        <strain>cv. Columbia</strain>
    </source>
</reference>
<reference key="3">
    <citation type="submission" date="2002-03" db="EMBL/GenBank/DDBJ databases">
        <title>Full-length cDNA from Arabidopsis thaliana.</title>
        <authorList>
            <person name="Brover V.V."/>
            <person name="Troukhan M.E."/>
            <person name="Alexandrov N.A."/>
            <person name="Lu Y.-P."/>
            <person name="Flavell R.B."/>
            <person name="Feldmann K.A."/>
        </authorList>
    </citation>
    <scope>NUCLEOTIDE SEQUENCE [LARGE SCALE MRNA]</scope>
</reference>
<gene>
    <name type="ordered locus">At2g01680</name>
    <name type="ORF">T8O11.15</name>
</gene>
<feature type="chain" id="PRO_0000305190" description="Ankyrin repeat-containing protein At2g01680">
    <location>
        <begin position="1"/>
        <end position="532"/>
    </location>
</feature>
<feature type="transmembrane region" description="Helical" evidence="1">
    <location>
        <begin position="354"/>
        <end position="374"/>
    </location>
</feature>
<feature type="transmembrane region" description="Helical" evidence="1">
    <location>
        <begin position="396"/>
        <end position="416"/>
    </location>
</feature>
<feature type="transmembrane region" description="Helical" evidence="1">
    <location>
        <begin position="436"/>
        <end position="456"/>
    </location>
</feature>
<feature type="transmembrane region" description="Helical" evidence="1">
    <location>
        <begin position="467"/>
        <end position="487"/>
    </location>
</feature>
<feature type="repeat" description="ANK 1">
    <location>
        <begin position="9"/>
        <end position="38"/>
    </location>
</feature>
<feature type="repeat" description="ANK 2">
    <location>
        <begin position="58"/>
        <end position="89"/>
    </location>
</feature>
<feature type="repeat" description="ANK 3">
    <location>
        <begin position="93"/>
        <end position="122"/>
    </location>
</feature>
<feature type="repeat" description="ANK 4">
    <location>
        <begin position="127"/>
        <end position="156"/>
    </location>
</feature>
<feature type="repeat" description="ANK 5">
    <location>
        <begin position="161"/>
        <end position="190"/>
    </location>
</feature>
<feature type="repeat" description="ANK 6">
    <location>
        <begin position="195"/>
        <end position="224"/>
    </location>
</feature>
<feature type="repeat" description="ANK 7">
    <location>
        <begin position="229"/>
        <end position="259"/>
    </location>
</feature>
<feature type="sequence conflict" description="In Ref. 3; AAM61483." evidence="2" ref="3">
    <original>C</original>
    <variation>S</variation>
    <location>
        <position position="45"/>
    </location>
</feature>
<comment type="subcellular location">
    <subcellularLocation>
        <location evidence="2">Membrane</location>
        <topology evidence="2">Multi-pass membrane protein</topology>
    </subcellularLocation>
</comment>
<evidence type="ECO:0000255" key="1"/>
<evidence type="ECO:0000305" key="2"/>
<keyword id="KW-0040">ANK repeat</keyword>
<keyword id="KW-0472">Membrane</keyword>
<keyword id="KW-1185">Reference proteome</keyword>
<keyword id="KW-0677">Repeat</keyword>
<keyword id="KW-0812">Transmembrane</keyword>
<keyword id="KW-1133">Transmembrane helix</keyword>